<feature type="chain" id="PRO_1000008918" description="Adenosine 5'-phosphosulfate reductase">
    <location>
        <begin position="1"/>
        <end position="234"/>
    </location>
</feature>
<feature type="active site" description="Nucleophile; cysteine thiosulfonate intermediate" evidence="1">
    <location>
        <position position="229"/>
    </location>
</feature>
<feature type="binding site" evidence="1">
    <location>
        <position position="120"/>
    </location>
    <ligand>
        <name>[4Fe-4S] cluster</name>
        <dbReference type="ChEBI" id="CHEBI:49883"/>
    </ligand>
</feature>
<feature type="binding site" evidence="1">
    <location>
        <position position="121"/>
    </location>
    <ligand>
        <name>[4Fe-4S] cluster</name>
        <dbReference type="ChEBI" id="CHEBI:49883"/>
    </ligand>
</feature>
<feature type="binding site" evidence="1">
    <location>
        <position position="203"/>
    </location>
    <ligand>
        <name>[4Fe-4S] cluster</name>
        <dbReference type="ChEBI" id="CHEBI:49883"/>
    </ligand>
</feature>
<feature type="binding site" evidence="1">
    <location>
        <position position="206"/>
    </location>
    <ligand>
        <name>[4Fe-4S] cluster</name>
        <dbReference type="ChEBI" id="CHEBI:49883"/>
    </ligand>
</feature>
<comment type="function">
    <text evidence="1">Catalyzes the formation of sulfite from adenosine 5'-phosphosulfate (APS) using thioredoxin as an electron donor.</text>
</comment>
<comment type="catalytic activity">
    <reaction evidence="1">
        <text>[thioredoxin]-disulfide + sulfite + AMP + 2 H(+) = adenosine 5'-phosphosulfate + [thioredoxin]-dithiol</text>
        <dbReference type="Rhea" id="RHEA:21976"/>
        <dbReference type="Rhea" id="RHEA-COMP:10698"/>
        <dbReference type="Rhea" id="RHEA-COMP:10700"/>
        <dbReference type="ChEBI" id="CHEBI:15378"/>
        <dbReference type="ChEBI" id="CHEBI:17359"/>
        <dbReference type="ChEBI" id="CHEBI:29950"/>
        <dbReference type="ChEBI" id="CHEBI:50058"/>
        <dbReference type="ChEBI" id="CHEBI:58243"/>
        <dbReference type="ChEBI" id="CHEBI:456215"/>
        <dbReference type="EC" id="1.8.4.10"/>
    </reaction>
</comment>
<comment type="cofactor">
    <cofactor evidence="1">
        <name>[4Fe-4S] cluster</name>
        <dbReference type="ChEBI" id="CHEBI:49883"/>
    </cofactor>
    <text evidence="1">Binds 1 [4Fe-4S] cluster per subunit.</text>
</comment>
<comment type="pathway">
    <text evidence="1">Sulfur metabolism; hydrogen sulfide biosynthesis; sulfite from sulfate.</text>
</comment>
<comment type="subcellular location">
    <subcellularLocation>
        <location evidence="1">Cytoplasm</location>
    </subcellularLocation>
</comment>
<comment type="similarity">
    <text evidence="1">Belongs to the PAPS reductase family. CysH subfamily.</text>
</comment>
<protein>
    <recommendedName>
        <fullName evidence="1">Adenosine 5'-phosphosulfate reductase</fullName>
        <shortName evidence="1">APS reductase</shortName>
        <ecNumber evidence="1">1.8.4.10</ecNumber>
    </recommendedName>
    <alternativeName>
        <fullName evidence="1">5'-adenylylsulfate reductase</fullName>
    </alternativeName>
    <alternativeName>
        <fullName evidence="1">Thioredoxin-dependent 5'-adenylylsulfate reductase</fullName>
    </alternativeName>
</protein>
<reference key="1">
    <citation type="journal article" date="2006" name="J. Bacteriol.">
        <title>Pathogenomic sequence analysis of Bacillus cereus and Bacillus thuringiensis isolates closely related to Bacillus anthracis.</title>
        <authorList>
            <person name="Han C.S."/>
            <person name="Xie G."/>
            <person name="Challacombe J.F."/>
            <person name="Altherr M.R."/>
            <person name="Bhotika S.S."/>
            <person name="Bruce D."/>
            <person name="Campbell C.S."/>
            <person name="Campbell M.L."/>
            <person name="Chen J."/>
            <person name="Chertkov O."/>
            <person name="Cleland C."/>
            <person name="Dimitrijevic M."/>
            <person name="Doggett N.A."/>
            <person name="Fawcett J.J."/>
            <person name="Glavina T."/>
            <person name="Goodwin L.A."/>
            <person name="Hill K.K."/>
            <person name="Hitchcock P."/>
            <person name="Jackson P.J."/>
            <person name="Keim P."/>
            <person name="Kewalramani A.R."/>
            <person name="Longmire J."/>
            <person name="Lucas S."/>
            <person name="Malfatti S."/>
            <person name="McMurry K."/>
            <person name="Meincke L.J."/>
            <person name="Misra M."/>
            <person name="Moseman B.L."/>
            <person name="Mundt M."/>
            <person name="Munk A.C."/>
            <person name="Okinaka R.T."/>
            <person name="Parson-Quintana B."/>
            <person name="Reilly L.P."/>
            <person name="Richardson P."/>
            <person name="Robinson D.L."/>
            <person name="Rubin E."/>
            <person name="Saunders E."/>
            <person name="Tapia R."/>
            <person name="Tesmer J.G."/>
            <person name="Thayer N."/>
            <person name="Thompson L.S."/>
            <person name="Tice H."/>
            <person name="Ticknor L.O."/>
            <person name="Wills P.L."/>
            <person name="Brettin T.S."/>
            <person name="Gilna P."/>
        </authorList>
    </citation>
    <scope>NUCLEOTIDE SEQUENCE [LARGE SCALE GENOMIC DNA]</scope>
    <source>
        <strain>97-27</strain>
    </source>
</reference>
<name>CYSH_BACHK</name>
<sequence>MLTYETWEENDISFSEEDETKGALSVLSWAYKEYENEIVYACSFGVEGMVLLHLINQVNPSAKVVFLDTNVHFQETYELIQKVRERFPSLNIIEKQPKLTLDEQAKLHGNKLWESNPNLCCKIRKILPLEESLANEKAWISGLRREQSETRKHTKFINQDHRFQSIKVCPLIHWTWKEVWRYVYKHSLPYNPLHDIGYPSIGCEKCTLPVGEGGDSRDGRWAGKVKTECGLHYQ</sequence>
<dbReference type="EC" id="1.8.4.10" evidence="1"/>
<dbReference type="EMBL" id="AE017355">
    <property type="protein sequence ID" value="AAT59429.1"/>
    <property type="molecule type" value="Genomic_DNA"/>
</dbReference>
<dbReference type="RefSeq" id="WP_000958980.1">
    <property type="nucleotide sequence ID" value="NC_005957.1"/>
</dbReference>
<dbReference type="RefSeq" id="YP_035637.1">
    <property type="nucleotide sequence ID" value="NC_005957.1"/>
</dbReference>
<dbReference type="SMR" id="Q6HLD4"/>
<dbReference type="KEGG" id="btk:BT9727_1303"/>
<dbReference type="PATRIC" id="fig|281309.8.peg.1374"/>
<dbReference type="HOGENOM" id="CLU_044089_2_1_9"/>
<dbReference type="Proteomes" id="UP000001301">
    <property type="component" value="Chromosome"/>
</dbReference>
<dbReference type="GO" id="GO:0005737">
    <property type="term" value="C:cytoplasm"/>
    <property type="evidence" value="ECO:0007669"/>
    <property type="project" value="UniProtKB-SubCell"/>
</dbReference>
<dbReference type="GO" id="GO:0051539">
    <property type="term" value="F:4 iron, 4 sulfur cluster binding"/>
    <property type="evidence" value="ECO:0007669"/>
    <property type="project" value="UniProtKB-UniRule"/>
</dbReference>
<dbReference type="GO" id="GO:0043866">
    <property type="term" value="F:adenylyl-sulfate reductase (thioredoxin) activity"/>
    <property type="evidence" value="ECO:0007669"/>
    <property type="project" value="UniProtKB-EC"/>
</dbReference>
<dbReference type="GO" id="GO:0046872">
    <property type="term" value="F:metal ion binding"/>
    <property type="evidence" value="ECO:0007669"/>
    <property type="project" value="UniProtKB-KW"/>
</dbReference>
<dbReference type="GO" id="GO:0004604">
    <property type="term" value="F:phosphoadenylyl-sulfate reductase (thioredoxin) activity"/>
    <property type="evidence" value="ECO:0007669"/>
    <property type="project" value="UniProtKB-UniRule"/>
</dbReference>
<dbReference type="GO" id="GO:0019344">
    <property type="term" value="P:cysteine biosynthetic process"/>
    <property type="evidence" value="ECO:0007669"/>
    <property type="project" value="InterPro"/>
</dbReference>
<dbReference type="GO" id="GO:0070814">
    <property type="term" value="P:hydrogen sulfide biosynthetic process"/>
    <property type="evidence" value="ECO:0007669"/>
    <property type="project" value="UniProtKB-UniRule"/>
</dbReference>
<dbReference type="GO" id="GO:0019379">
    <property type="term" value="P:sulfate assimilation, phosphoadenylyl sulfate reduction by phosphoadenylyl-sulfate reductase (thioredoxin)"/>
    <property type="evidence" value="ECO:0007669"/>
    <property type="project" value="UniProtKB-UniRule"/>
</dbReference>
<dbReference type="CDD" id="cd23945">
    <property type="entry name" value="PAPS_reductase"/>
    <property type="match status" value="1"/>
</dbReference>
<dbReference type="FunFam" id="3.40.50.620:FF:000095">
    <property type="entry name" value="Phosphoadenosine phosphosulfate reductase"/>
    <property type="match status" value="1"/>
</dbReference>
<dbReference type="Gene3D" id="3.40.50.620">
    <property type="entry name" value="HUPs"/>
    <property type="match status" value="1"/>
</dbReference>
<dbReference type="HAMAP" id="MF_00063">
    <property type="entry name" value="CysH"/>
    <property type="match status" value="1"/>
</dbReference>
<dbReference type="InterPro" id="IPR011798">
    <property type="entry name" value="APS_reductase"/>
</dbReference>
<dbReference type="InterPro" id="IPR004511">
    <property type="entry name" value="PAPS/APS_Rdtase"/>
</dbReference>
<dbReference type="InterPro" id="IPR002500">
    <property type="entry name" value="PAPS_reduct_dom"/>
</dbReference>
<dbReference type="InterPro" id="IPR014729">
    <property type="entry name" value="Rossmann-like_a/b/a_fold"/>
</dbReference>
<dbReference type="NCBIfam" id="TIGR02055">
    <property type="entry name" value="APS_reductase"/>
    <property type="match status" value="1"/>
</dbReference>
<dbReference type="NCBIfam" id="TIGR00434">
    <property type="entry name" value="cysH"/>
    <property type="match status" value="1"/>
</dbReference>
<dbReference type="NCBIfam" id="NF002537">
    <property type="entry name" value="PRK02090.1"/>
    <property type="match status" value="1"/>
</dbReference>
<dbReference type="PANTHER" id="PTHR46509">
    <property type="entry name" value="PHOSPHOADENOSINE PHOSPHOSULFATE REDUCTASE"/>
    <property type="match status" value="1"/>
</dbReference>
<dbReference type="PANTHER" id="PTHR46509:SF1">
    <property type="entry name" value="PHOSPHOADENOSINE PHOSPHOSULFATE REDUCTASE"/>
    <property type="match status" value="1"/>
</dbReference>
<dbReference type="Pfam" id="PF01507">
    <property type="entry name" value="PAPS_reduct"/>
    <property type="match status" value="1"/>
</dbReference>
<dbReference type="PIRSF" id="PIRSF000857">
    <property type="entry name" value="PAPS_reductase"/>
    <property type="match status" value="1"/>
</dbReference>
<dbReference type="SUPFAM" id="SSF52402">
    <property type="entry name" value="Adenine nucleotide alpha hydrolases-like"/>
    <property type="match status" value="1"/>
</dbReference>
<organism>
    <name type="scientific">Bacillus thuringiensis subsp. konkukian (strain 97-27)</name>
    <dbReference type="NCBI Taxonomy" id="281309"/>
    <lineage>
        <taxon>Bacteria</taxon>
        <taxon>Bacillati</taxon>
        <taxon>Bacillota</taxon>
        <taxon>Bacilli</taxon>
        <taxon>Bacillales</taxon>
        <taxon>Bacillaceae</taxon>
        <taxon>Bacillus</taxon>
        <taxon>Bacillus cereus group</taxon>
    </lineage>
</organism>
<gene>
    <name evidence="1" type="primary">cysH</name>
    <name type="ordered locus">BT9727_1303</name>
</gene>
<evidence type="ECO:0000255" key="1">
    <source>
        <dbReference type="HAMAP-Rule" id="MF_00063"/>
    </source>
</evidence>
<keyword id="KW-0963">Cytoplasm</keyword>
<keyword id="KW-0408">Iron</keyword>
<keyword id="KW-0411">Iron-sulfur</keyword>
<keyword id="KW-0479">Metal-binding</keyword>
<keyword id="KW-0560">Oxidoreductase</keyword>
<accession>Q6HLD4</accession>
<proteinExistence type="inferred from homology"/>